<name>ACCD_RUBXD</name>
<reference key="1">
    <citation type="submission" date="2006-06" db="EMBL/GenBank/DDBJ databases">
        <title>Complete sequence of Rubrobacter xylanophilus DSM 9941.</title>
        <authorList>
            <consortium name="US DOE Joint Genome Institute"/>
            <person name="Copeland A."/>
            <person name="Lucas S."/>
            <person name="Lapidus A."/>
            <person name="Barry K."/>
            <person name="Detter J.C."/>
            <person name="Glavina del Rio T."/>
            <person name="Hammon N."/>
            <person name="Israni S."/>
            <person name="Dalin E."/>
            <person name="Tice H."/>
            <person name="Pitluck S."/>
            <person name="Munk A.C."/>
            <person name="Brettin T."/>
            <person name="Bruce D."/>
            <person name="Han C."/>
            <person name="Tapia R."/>
            <person name="Gilna P."/>
            <person name="Schmutz J."/>
            <person name="Larimer F."/>
            <person name="Land M."/>
            <person name="Hauser L."/>
            <person name="Kyrpides N."/>
            <person name="Lykidis A."/>
            <person name="da Costa M.S."/>
            <person name="Rainey F.A."/>
            <person name="Empadinhas N."/>
            <person name="Jolivet E."/>
            <person name="Battista J.R."/>
            <person name="Richardson P."/>
        </authorList>
    </citation>
    <scope>NUCLEOTIDE SEQUENCE [LARGE SCALE GENOMIC DNA]</scope>
    <source>
        <strain>DSM 9941 / JCM 11954 / NBRC 16129 / PRD-1</strain>
    </source>
</reference>
<sequence>MDATVFTKCERCKQPVYEKDLRARFNVCPNCEFHYPLPAPERVRLLTDAGSFEERDGELAAGDPLGFEGYPDRLRSARKKTGLGDAILSGVGEIGGRRVALAVMDFRFIGGSMGSVVGERVARTVELARAEGLPLVTVSASGGARMFEGIYSLMQMAKTSVALSRFMEGSKPYISILTDPTFGGVTASFATAADIIIAEPGARVGFAGARVIEQTTKERLPEGFQTAEFQREHGMVDRIVHRLALKGDLERLLGFVG</sequence>
<organism>
    <name type="scientific">Rubrobacter xylanophilus (strain DSM 9941 / JCM 11954 / NBRC 16129 / PRD-1)</name>
    <dbReference type="NCBI Taxonomy" id="266117"/>
    <lineage>
        <taxon>Bacteria</taxon>
        <taxon>Bacillati</taxon>
        <taxon>Actinomycetota</taxon>
        <taxon>Rubrobacteria</taxon>
        <taxon>Rubrobacterales</taxon>
        <taxon>Rubrobacteraceae</taxon>
        <taxon>Rubrobacter</taxon>
    </lineage>
</organism>
<protein>
    <recommendedName>
        <fullName evidence="1">Acetyl-coenzyme A carboxylase carboxyl transferase subunit beta</fullName>
        <shortName evidence="1">ACCase subunit beta</shortName>
        <shortName evidence="1">Acetyl-CoA carboxylase carboxyltransferase subunit beta</shortName>
        <ecNumber evidence="1">2.1.3.15</ecNumber>
    </recommendedName>
</protein>
<evidence type="ECO:0000255" key="1">
    <source>
        <dbReference type="HAMAP-Rule" id="MF_01395"/>
    </source>
</evidence>
<evidence type="ECO:0000255" key="2">
    <source>
        <dbReference type="PROSITE-ProRule" id="PRU01136"/>
    </source>
</evidence>
<dbReference type="EC" id="2.1.3.15" evidence="1"/>
<dbReference type="EMBL" id="CP000386">
    <property type="protein sequence ID" value="ABG05032.1"/>
    <property type="molecule type" value="Genomic_DNA"/>
</dbReference>
<dbReference type="RefSeq" id="WP_011565047.1">
    <property type="nucleotide sequence ID" value="NC_008148.1"/>
</dbReference>
<dbReference type="SMR" id="Q1AU96"/>
<dbReference type="STRING" id="266117.Rxyl_2088"/>
<dbReference type="KEGG" id="rxy:Rxyl_2088"/>
<dbReference type="eggNOG" id="COG0777">
    <property type="taxonomic scope" value="Bacteria"/>
</dbReference>
<dbReference type="HOGENOM" id="CLU_015486_1_1_11"/>
<dbReference type="PhylomeDB" id="Q1AU96"/>
<dbReference type="UniPathway" id="UPA00655">
    <property type="reaction ID" value="UER00711"/>
</dbReference>
<dbReference type="Proteomes" id="UP000006637">
    <property type="component" value="Chromosome"/>
</dbReference>
<dbReference type="GO" id="GO:0009317">
    <property type="term" value="C:acetyl-CoA carboxylase complex"/>
    <property type="evidence" value="ECO:0007669"/>
    <property type="project" value="InterPro"/>
</dbReference>
<dbReference type="GO" id="GO:0003989">
    <property type="term" value="F:acetyl-CoA carboxylase activity"/>
    <property type="evidence" value="ECO:0007669"/>
    <property type="project" value="InterPro"/>
</dbReference>
<dbReference type="GO" id="GO:0005524">
    <property type="term" value="F:ATP binding"/>
    <property type="evidence" value="ECO:0007669"/>
    <property type="project" value="UniProtKB-KW"/>
</dbReference>
<dbReference type="GO" id="GO:0016743">
    <property type="term" value="F:carboxyl- or carbamoyltransferase activity"/>
    <property type="evidence" value="ECO:0007669"/>
    <property type="project" value="UniProtKB-UniRule"/>
</dbReference>
<dbReference type="GO" id="GO:0008270">
    <property type="term" value="F:zinc ion binding"/>
    <property type="evidence" value="ECO:0007669"/>
    <property type="project" value="UniProtKB-UniRule"/>
</dbReference>
<dbReference type="GO" id="GO:0006633">
    <property type="term" value="P:fatty acid biosynthetic process"/>
    <property type="evidence" value="ECO:0007669"/>
    <property type="project" value="UniProtKB-KW"/>
</dbReference>
<dbReference type="GO" id="GO:2001295">
    <property type="term" value="P:malonyl-CoA biosynthetic process"/>
    <property type="evidence" value="ECO:0007669"/>
    <property type="project" value="UniProtKB-UniRule"/>
</dbReference>
<dbReference type="Gene3D" id="3.90.226.10">
    <property type="entry name" value="2-enoyl-CoA Hydratase, Chain A, domain 1"/>
    <property type="match status" value="1"/>
</dbReference>
<dbReference type="HAMAP" id="MF_01395">
    <property type="entry name" value="AcetylCoA_CT_beta"/>
    <property type="match status" value="1"/>
</dbReference>
<dbReference type="InterPro" id="IPR034733">
    <property type="entry name" value="AcCoA_carboxyl_beta"/>
</dbReference>
<dbReference type="InterPro" id="IPR000438">
    <property type="entry name" value="Acetyl_CoA_COase_Trfase_b_su"/>
</dbReference>
<dbReference type="InterPro" id="IPR029045">
    <property type="entry name" value="ClpP/crotonase-like_dom_sf"/>
</dbReference>
<dbReference type="InterPro" id="IPR011762">
    <property type="entry name" value="COA_CT_N"/>
</dbReference>
<dbReference type="InterPro" id="IPR041010">
    <property type="entry name" value="Znf-ACC"/>
</dbReference>
<dbReference type="NCBIfam" id="TIGR00515">
    <property type="entry name" value="accD"/>
    <property type="match status" value="1"/>
</dbReference>
<dbReference type="PANTHER" id="PTHR42995">
    <property type="entry name" value="ACETYL-COENZYME A CARBOXYLASE CARBOXYL TRANSFERASE SUBUNIT BETA, CHLOROPLASTIC"/>
    <property type="match status" value="1"/>
</dbReference>
<dbReference type="PANTHER" id="PTHR42995:SF5">
    <property type="entry name" value="ACETYL-COENZYME A CARBOXYLASE CARBOXYL TRANSFERASE SUBUNIT BETA, CHLOROPLASTIC"/>
    <property type="match status" value="1"/>
</dbReference>
<dbReference type="Pfam" id="PF01039">
    <property type="entry name" value="Carboxyl_trans"/>
    <property type="match status" value="1"/>
</dbReference>
<dbReference type="Pfam" id="PF17848">
    <property type="entry name" value="Zn_ribbon_ACC"/>
    <property type="match status" value="1"/>
</dbReference>
<dbReference type="PRINTS" id="PR01070">
    <property type="entry name" value="ACCCTRFRASEB"/>
</dbReference>
<dbReference type="SUPFAM" id="SSF52096">
    <property type="entry name" value="ClpP/crotonase"/>
    <property type="match status" value="1"/>
</dbReference>
<dbReference type="PROSITE" id="PS50980">
    <property type="entry name" value="COA_CT_NTER"/>
    <property type="match status" value="1"/>
</dbReference>
<feature type="chain" id="PRO_0000389843" description="Acetyl-coenzyme A carboxylase carboxyl transferase subunit beta">
    <location>
        <begin position="1"/>
        <end position="257"/>
    </location>
</feature>
<feature type="domain" description="CoA carboxyltransferase N-terminal" evidence="2">
    <location>
        <begin position="5"/>
        <end position="257"/>
    </location>
</feature>
<feature type="zinc finger region" description="C4-type" evidence="1">
    <location>
        <begin position="9"/>
        <end position="31"/>
    </location>
</feature>
<feature type="binding site" evidence="1">
    <location>
        <position position="9"/>
    </location>
    <ligand>
        <name>Zn(2+)</name>
        <dbReference type="ChEBI" id="CHEBI:29105"/>
    </ligand>
</feature>
<feature type="binding site" evidence="1">
    <location>
        <position position="12"/>
    </location>
    <ligand>
        <name>Zn(2+)</name>
        <dbReference type="ChEBI" id="CHEBI:29105"/>
    </ligand>
</feature>
<feature type="binding site" evidence="1">
    <location>
        <position position="28"/>
    </location>
    <ligand>
        <name>Zn(2+)</name>
        <dbReference type="ChEBI" id="CHEBI:29105"/>
    </ligand>
</feature>
<feature type="binding site" evidence="1">
    <location>
        <position position="31"/>
    </location>
    <ligand>
        <name>Zn(2+)</name>
        <dbReference type="ChEBI" id="CHEBI:29105"/>
    </ligand>
</feature>
<proteinExistence type="inferred from homology"/>
<comment type="function">
    <text evidence="1">Component of the acetyl coenzyme A carboxylase (ACC) complex. Biotin carboxylase (BC) catalyzes the carboxylation of biotin on its carrier protein (BCCP) and then the CO(2) group is transferred by the transcarboxylase to acetyl-CoA to form malonyl-CoA.</text>
</comment>
<comment type="catalytic activity">
    <reaction evidence="1">
        <text>N(6)-carboxybiotinyl-L-lysyl-[protein] + acetyl-CoA = N(6)-biotinyl-L-lysyl-[protein] + malonyl-CoA</text>
        <dbReference type="Rhea" id="RHEA:54728"/>
        <dbReference type="Rhea" id="RHEA-COMP:10505"/>
        <dbReference type="Rhea" id="RHEA-COMP:10506"/>
        <dbReference type="ChEBI" id="CHEBI:57288"/>
        <dbReference type="ChEBI" id="CHEBI:57384"/>
        <dbReference type="ChEBI" id="CHEBI:83144"/>
        <dbReference type="ChEBI" id="CHEBI:83145"/>
        <dbReference type="EC" id="2.1.3.15"/>
    </reaction>
</comment>
<comment type="cofactor">
    <cofactor evidence="1">
        <name>Zn(2+)</name>
        <dbReference type="ChEBI" id="CHEBI:29105"/>
    </cofactor>
    <text evidence="1">Binds 1 zinc ion per subunit.</text>
</comment>
<comment type="pathway">
    <text evidence="1">Lipid metabolism; malonyl-CoA biosynthesis; malonyl-CoA from acetyl-CoA: step 1/1.</text>
</comment>
<comment type="subunit">
    <text evidence="1">Acetyl-CoA carboxylase is a heterohexamer composed of biotin carboxyl carrier protein (AccB), biotin carboxylase (AccC) and two subunits each of ACCase subunit alpha (AccA) and ACCase subunit beta (AccD).</text>
</comment>
<comment type="subcellular location">
    <subcellularLocation>
        <location evidence="1">Cytoplasm</location>
    </subcellularLocation>
</comment>
<comment type="similarity">
    <text evidence="1">Belongs to the AccD/PCCB family.</text>
</comment>
<keyword id="KW-0067">ATP-binding</keyword>
<keyword id="KW-0963">Cytoplasm</keyword>
<keyword id="KW-0275">Fatty acid biosynthesis</keyword>
<keyword id="KW-0276">Fatty acid metabolism</keyword>
<keyword id="KW-0444">Lipid biosynthesis</keyword>
<keyword id="KW-0443">Lipid metabolism</keyword>
<keyword id="KW-0479">Metal-binding</keyword>
<keyword id="KW-0547">Nucleotide-binding</keyword>
<keyword id="KW-1185">Reference proteome</keyword>
<keyword id="KW-0808">Transferase</keyword>
<keyword id="KW-0862">Zinc</keyword>
<keyword id="KW-0863">Zinc-finger</keyword>
<gene>
    <name evidence="1" type="primary">accD</name>
    <name type="ordered locus">Rxyl_2088</name>
</gene>
<accession>Q1AU96</accession>